<proteinExistence type="inferred from homology"/>
<reference key="1">
    <citation type="journal article" date="2006" name="Proc. Natl. Acad. Sci. U.S.A.">
        <title>A molecular neuroethological approach for identifying and characterizing a cascade of behaviorally regulated genes.</title>
        <authorList>
            <person name="Wada K."/>
            <person name="Howard J.T."/>
            <person name="McConnell P."/>
            <person name="Whitney O."/>
            <person name="Lints T."/>
            <person name="Rivas M.V."/>
            <person name="Horita H."/>
            <person name="Patterson M.A."/>
            <person name="White S.A."/>
            <person name="Scharff C."/>
            <person name="Haesler S."/>
            <person name="Zhao S."/>
            <person name="Sakaguchi H."/>
            <person name="Hagiwara M."/>
            <person name="Shiraki T."/>
            <person name="Hirozane-Kishikawa T."/>
            <person name="Skene P."/>
            <person name="Hayashizaki Y."/>
            <person name="Carninci P."/>
            <person name="Jarvis E.D."/>
        </authorList>
    </citation>
    <scope>NUCLEOTIDE SEQUENCE [LARGE SCALE MRNA]</scope>
    <source>
        <tissue>Brain</tissue>
    </source>
</reference>
<name>LYRM4_TAEGU</name>
<sequence length="89" mass="10476">MAASSRAQVLRLYRALLRESQRFSSYNYRTYAIRRIRDAFRENKNIADSEKIEELLNKAKANLEVIQRQGTIDHMYATEKLIIERPGNT</sequence>
<comment type="function">
    <text evidence="1">Required for nuclear and mitochondrial iron-sulfur protein biosynthesis.</text>
</comment>
<comment type="pathway">
    <text>Cofactor biosynthesis; iron-sulfur cluster biosynthesis.</text>
</comment>
<comment type="subcellular location">
    <subcellularLocation>
        <location evidence="1">Mitochondrion</location>
    </subcellularLocation>
    <subcellularLocation>
        <location evidence="1">Nucleus</location>
    </subcellularLocation>
</comment>
<comment type="similarity">
    <text evidence="3">Belongs to the complex I LYR family.</text>
</comment>
<protein>
    <recommendedName>
        <fullName>LYR motif-containing protein 4</fullName>
    </recommendedName>
</protein>
<keyword id="KW-0175">Coiled coil</keyword>
<keyword id="KW-0496">Mitochondrion</keyword>
<keyword id="KW-0539">Nucleus</keyword>
<keyword id="KW-1185">Reference proteome</keyword>
<organism>
    <name type="scientific">Taeniopygia guttata</name>
    <name type="common">Zebra finch</name>
    <name type="synonym">Poephila guttata</name>
    <dbReference type="NCBI Taxonomy" id="59729"/>
    <lineage>
        <taxon>Eukaryota</taxon>
        <taxon>Metazoa</taxon>
        <taxon>Chordata</taxon>
        <taxon>Craniata</taxon>
        <taxon>Vertebrata</taxon>
        <taxon>Euteleostomi</taxon>
        <taxon>Archelosauria</taxon>
        <taxon>Archosauria</taxon>
        <taxon>Dinosauria</taxon>
        <taxon>Saurischia</taxon>
        <taxon>Theropoda</taxon>
        <taxon>Coelurosauria</taxon>
        <taxon>Aves</taxon>
        <taxon>Neognathae</taxon>
        <taxon>Neoaves</taxon>
        <taxon>Telluraves</taxon>
        <taxon>Australaves</taxon>
        <taxon>Passeriformes</taxon>
        <taxon>Passeroidea</taxon>
        <taxon>Estrildidae</taxon>
        <taxon>Estrildinae</taxon>
        <taxon>Taeniopygia</taxon>
    </lineage>
</organism>
<dbReference type="EMBL" id="DQ214409">
    <property type="protein sequence ID" value="ACH44369.1"/>
    <property type="molecule type" value="mRNA"/>
</dbReference>
<dbReference type="RefSeq" id="NP_001185816.1">
    <property type="nucleotide sequence ID" value="NM_001198887.1"/>
</dbReference>
<dbReference type="SMR" id="B5FZA8"/>
<dbReference type="STRING" id="59729.ENSTGUP00000033134"/>
<dbReference type="GeneID" id="100190252"/>
<dbReference type="KEGG" id="tgu:100190252"/>
<dbReference type="CTD" id="57128"/>
<dbReference type="InParanoid" id="B5FZA8"/>
<dbReference type="OrthoDB" id="275715at2759"/>
<dbReference type="UniPathway" id="UPA00266"/>
<dbReference type="Proteomes" id="UP000007754">
    <property type="component" value="Unplaced"/>
</dbReference>
<dbReference type="GO" id="GO:1990221">
    <property type="term" value="C:L-cysteine desulfurase complex"/>
    <property type="evidence" value="ECO:0007669"/>
    <property type="project" value="TreeGrafter"/>
</dbReference>
<dbReference type="GO" id="GO:0005739">
    <property type="term" value="C:mitochondrion"/>
    <property type="evidence" value="ECO:0007669"/>
    <property type="project" value="UniProtKB-SubCell"/>
</dbReference>
<dbReference type="GO" id="GO:0005634">
    <property type="term" value="C:nucleus"/>
    <property type="evidence" value="ECO:0007669"/>
    <property type="project" value="UniProtKB-SubCell"/>
</dbReference>
<dbReference type="GO" id="GO:0016226">
    <property type="term" value="P:iron-sulfur cluster assembly"/>
    <property type="evidence" value="ECO:0007669"/>
    <property type="project" value="InterPro"/>
</dbReference>
<dbReference type="CDD" id="cd20264">
    <property type="entry name" value="Complex1_LYR_LYRM4"/>
    <property type="match status" value="1"/>
</dbReference>
<dbReference type="InterPro" id="IPR008011">
    <property type="entry name" value="Complex1_LYR_dom"/>
</dbReference>
<dbReference type="InterPro" id="IPR045297">
    <property type="entry name" value="Complex1_LYR_LYRM4"/>
</dbReference>
<dbReference type="InterPro" id="IPR051522">
    <property type="entry name" value="ISC_assembly_LYR"/>
</dbReference>
<dbReference type="PANTHER" id="PTHR13166:SF7">
    <property type="entry name" value="LYR MOTIF-CONTAINING PROTEIN 4"/>
    <property type="match status" value="1"/>
</dbReference>
<dbReference type="PANTHER" id="PTHR13166">
    <property type="entry name" value="PROTEIN C6ORF149"/>
    <property type="match status" value="1"/>
</dbReference>
<dbReference type="Pfam" id="PF05347">
    <property type="entry name" value="Complex1_LYR"/>
    <property type="match status" value="1"/>
</dbReference>
<accession>B5FZA8</accession>
<feature type="chain" id="PRO_0000370331" description="LYR motif-containing protein 4">
    <location>
        <begin position="1"/>
        <end position="89"/>
    </location>
</feature>
<feature type="coiled-coil region" evidence="2">
    <location>
        <begin position="44"/>
        <end position="71"/>
    </location>
</feature>
<evidence type="ECO:0000250" key="1"/>
<evidence type="ECO:0000255" key="2"/>
<evidence type="ECO:0000305" key="3"/>
<gene>
    <name type="primary">LYRM4</name>
    <name type="synonym">ISD11</name>
</gene>